<accession>O66805</accession>
<name>MURB_AQUAE</name>
<feature type="chain" id="PRO_0000179171" description="UDP-N-acetylenolpyruvoylglucosamine reductase">
    <location>
        <begin position="1"/>
        <end position="297"/>
    </location>
</feature>
<feature type="domain" description="FAD-binding PCMH-type">
    <location>
        <begin position="16"/>
        <end position="182"/>
    </location>
</feature>
<feature type="active site" evidence="1">
    <location>
        <position position="162"/>
    </location>
</feature>
<feature type="active site" description="Proton donor" evidence="1">
    <location>
        <position position="210"/>
    </location>
</feature>
<feature type="active site" evidence="1">
    <location>
        <position position="280"/>
    </location>
</feature>
<keyword id="KW-0131">Cell cycle</keyword>
<keyword id="KW-0132">Cell division</keyword>
<keyword id="KW-0133">Cell shape</keyword>
<keyword id="KW-0961">Cell wall biogenesis/degradation</keyword>
<keyword id="KW-0963">Cytoplasm</keyword>
<keyword id="KW-0274">FAD</keyword>
<keyword id="KW-0285">Flavoprotein</keyword>
<keyword id="KW-0521">NADP</keyword>
<keyword id="KW-0560">Oxidoreductase</keyword>
<keyword id="KW-0573">Peptidoglycan synthesis</keyword>
<keyword id="KW-1185">Reference proteome</keyword>
<comment type="function">
    <text evidence="1">Cell wall formation.</text>
</comment>
<comment type="catalytic activity">
    <reaction>
        <text>UDP-N-acetyl-alpha-D-muramate + NADP(+) = UDP-N-acetyl-3-O-(1-carboxyvinyl)-alpha-D-glucosamine + NADPH + H(+)</text>
        <dbReference type="Rhea" id="RHEA:12248"/>
        <dbReference type="ChEBI" id="CHEBI:15378"/>
        <dbReference type="ChEBI" id="CHEBI:57783"/>
        <dbReference type="ChEBI" id="CHEBI:58349"/>
        <dbReference type="ChEBI" id="CHEBI:68483"/>
        <dbReference type="ChEBI" id="CHEBI:70757"/>
        <dbReference type="EC" id="1.3.1.98"/>
    </reaction>
</comment>
<comment type="cofactor">
    <cofactor evidence="1">
        <name>FAD</name>
        <dbReference type="ChEBI" id="CHEBI:57692"/>
    </cofactor>
</comment>
<comment type="pathway">
    <text>Cell wall biogenesis; peptidoglycan biosynthesis.</text>
</comment>
<comment type="subcellular location">
    <subcellularLocation>
        <location evidence="1">Cytoplasm</location>
    </subcellularLocation>
</comment>
<comment type="similarity">
    <text evidence="2">Belongs to the MurB family.</text>
</comment>
<sequence>MLFLKNVPLQNLTTIKIGGRVSFYAEPSDLKEISLCIDFSKSRDIPLFVLGNGSNTIFGDVRGLVVNLKNLKGFKVKEIKGKFFVEAFSGTPLKDLIRFSVKENVKSFYKLLGFPASVGGAVSMNAGAFGVEISDFLKEVYFVDWEGKLQKAKRDELNFSYRKSPFPKLGIVFKVVFEFERSKENILPKYEKIRRIRKEKQPINLPTSGSTFKNPEGNFAGKLLEKAGLKGFRLKNVGFSEKHANFLVNYGGGTFSEVVDLINIAKERVYENFGIVLEEEVKLIESSGSDGWKVLGA</sequence>
<protein>
    <recommendedName>
        <fullName>UDP-N-acetylenolpyruvoylglucosamine reductase</fullName>
        <ecNumber>1.3.1.98</ecNumber>
    </recommendedName>
    <alternativeName>
        <fullName>UDP-N-acetylmuramate dehydrogenase</fullName>
    </alternativeName>
</protein>
<gene>
    <name type="primary">murB</name>
    <name type="ordered locus">aq_520</name>
</gene>
<evidence type="ECO:0000250" key="1"/>
<evidence type="ECO:0000305" key="2"/>
<reference key="1">
    <citation type="journal article" date="1998" name="Nature">
        <title>The complete genome of the hyperthermophilic bacterium Aquifex aeolicus.</title>
        <authorList>
            <person name="Deckert G."/>
            <person name="Warren P.V."/>
            <person name="Gaasterland T."/>
            <person name="Young W.G."/>
            <person name="Lenox A.L."/>
            <person name="Graham D.E."/>
            <person name="Overbeek R."/>
            <person name="Snead M.A."/>
            <person name="Keller M."/>
            <person name="Aujay M."/>
            <person name="Huber R."/>
            <person name="Feldman R.A."/>
            <person name="Short J.M."/>
            <person name="Olsen G.J."/>
            <person name="Swanson R.V."/>
        </authorList>
    </citation>
    <scope>NUCLEOTIDE SEQUENCE [LARGE SCALE GENOMIC DNA]</scope>
    <source>
        <strain>VF5</strain>
    </source>
</reference>
<proteinExistence type="inferred from homology"/>
<organism>
    <name type="scientific">Aquifex aeolicus (strain VF5)</name>
    <dbReference type="NCBI Taxonomy" id="224324"/>
    <lineage>
        <taxon>Bacteria</taxon>
        <taxon>Pseudomonadati</taxon>
        <taxon>Aquificota</taxon>
        <taxon>Aquificia</taxon>
        <taxon>Aquificales</taxon>
        <taxon>Aquificaceae</taxon>
        <taxon>Aquifex</taxon>
    </lineage>
</organism>
<dbReference type="EC" id="1.3.1.98"/>
<dbReference type="EMBL" id="AE000657">
    <property type="protein sequence ID" value="AAC06766.1"/>
    <property type="molecule type" value="Genomic_DNA"/>
</dbReference>
<dbReference type="PIR" id="A70347">
    <property type="entry name" value="A70347"/>
</dbReference>
<dbReference type="RefSeq" id="NP_213365.1">
    <property type="nucleotide sequence ID" value="NC_000918.1"/>
</dbReference>
<dbReference type="RefSeq" id="WP_010880303.1">
    <property type="nucleotide sequence ID" value="NC_000918.1"/>
</dbReference>
<dbReference type="SMR" id="O66805"/>
<dbReference type="FunCoup" id="O66805">
    <property type="interactions" value="398"/>
</dbReference>
<dbReference type="STRING" id="224324.aq_520"/>
<dbReference type="EnsemblBacteria" id="AAC06766">
    <property type="protein sequence ID" value="AAC06766"/>
    <property type="gene ID" value="aq_520"/>
</dbReference>
<dbReference type="KEGG" id="aae:aq_520"/>
<dbReference type="PATRIC" id="fig|224324.8.peg.427"/>
<dbReference type="eggNOG" id="COG0812">
    <property type="taxonomic scope" value="Bacteria"/>
</dbReference>
<dbReference type="HOGENOM" id="CLU_035304_1_1_0"/>
<dbReference type="InParanoid" id="O66805"/>
<dbReference type="OrthoDB" id="9804753at2"/>
<dbReference type="UniPathway" id="UPA00219"/>
<dbReference type="Proteomes" id="UP000000798">
    <property type="component" value="Chromosome"/>
</dbReference>
<dbReference type="GO" id="GO:0005829">
    <property type="term" value="C:cytosol"/>
    <property type="evidence" value="ECO:0000318"/>
    <property type="project" value="GO_Central"/>
</dbReference>
<dbReference type="GO" id="GO:0071949">
    <property type="term" value="F:FAD binding"/>
    <property type="evidence" value="ECO:0007669"/>
    <property type="project" value="InterPro"/>
</dbReference>
<dbReference type="GO" id="GO:0050660">
    <property type="term" value="F:flavin adenine dinucleotide binding"/>
    <property type="evidence" value="ECO:0000318"/>
    <property type="project" value="GO_Central"/>
</dbReference>
<dbReference type="GO" id="GO:0008762">
    <property type="term" value="F:UDP-N-acetylmuramate dehydrogenase activity"/>
    <property type="evidence" value="ECO:0000318"/>
    <property type="project" value="GO_Central"/>
</dbReference>
<dbReference type="GO" id="GO:0051301">
    <property type="term" value="P:cell division"/>
    <property type="evidence" value="ECO:0007669"/>
    <property type="project" value="UniProtKB-KW"/>
</dbReference>
<dbReference type="GO" id="GO:0071555">
    <property type="term" value="P:cell wall organization"/>
    <property type="evidence" value="ECO:0000318"/>
    <property type="project" value="GO_Central"/>
</dbReference>
<dbReference type="GO" id="GO:0009252">
    <property type="term" value="P:peptidoglycan biosynthetic process"/>
    <property type="evidence" value="ECO:0007669"/>
    <property type="project" value="UniProtKB-UniRule"/>
</dbReference>
<dbReference type="GO" id="GO:0008360">
    <property type="term" value="P:regulation of cell shape"/>
    <property type="evidence" value="ECO:0007669"/>
    <property type="project" value="UniProtKB-KW"/>
</dbReference>
<dbReference type="Gene3D" id="3.30.465.10">
    <property type="match status" value="1"/>
</dbReference>
<dbReference type="Gene3D" id="3.90.78.10">
    <property type="entry name" value="UDP-N-acetylenolpyruvoylglucosamine reductase, C-terminal domain"/>
    <property type="match status" value="1"/>
</dbReference>
<dbReference type="Gene3D" id="3.30.43.10">
    <property type="entry name" value="Uridine Diphospho-n-acetylenolpyruvylglucosamine Reductase, domain 2"/>
    <property type="match status" value="1"/>
</dbReference>
<dbReference type="HAMAP" id="MF_00037">
    <property type="entry name" value="MurB"/>
    <property type="match status" value="1"/>
</dbReference>
<dbReference type="InterPro" id="IPR016166">
    <property type="entry name" value="FAD-bd_PCMH"/>
</dbReference>
<dbReference type="InterPro" id="IPR036318">
    <property type="entry name" value="FAD-bd_PCMH-like_sf"/>
</dbReference>
<dbReference type="InterPro" id="IPR016167">
    <property type="entry name" value="FAD-bd_PCMH_sub1"/>
</dbReference>
<dbReference type="InterPro" id="IPR016169">
    <property type="entry name" value="FAD-bd_PCMH_sub2"/>
</dbReference>
<dbReference type="InterPro" id="IPR003170">
    <property type="entry name" value="MurB"/>
</dbReference>
<dbReference type="InterPro" id="IPR011601">
    <property type="entry name" value="MurB_C"/>
</dbReference>
<dbReference type="InterPro" id="IPR036635">
    <property type="entry name" value="MurB_C_sf"/>
</dbReference>
<dbReference type="InterPro" id="IPR006094">
    <property type="entry name" value="Oxid_FAD_bind_N"/>
</dbReference>
<dbReference type="NCBIfam" id="TIGR00179">
    <property type="entry name" value="murB"/>
    <property type="match status" value="1"/>
</dbReference>
<dbReference type="NCBIfam" id="NF010480">
    <property type="entry name" value="PRK13905.1"/>
    <property type="match status" value="1"/>
</dbReference>
<dbReference type="PANTHER" id="PTHR21071">
    <property type="entry name" value="UDP-N-ACETYLENOLPYRUVOYLGLUCOSAMINE REDUCTASE"/>
    <property type="match status" value="1"/>
</dbReference>
<dbReference type="PANTHER" id="PTHR21071:SF4">
    <property type="entry name" value="UDP-N-ACETYLENOLPYRUVOYLGLUCOSAMINE REDUCTASE"/>
    <property type="match status" value="1"/>
</dbReference>
<dbReference type="Pfam" id="PF01565">
    <property type="entry name" value="FAD_binding_4"/>
    <property type="match status" value="1"/>
</dbReference>
<dbReference type="Pfam" id="PF02873">
    <property type="entry name" value="MurB_C"/>
    <property type="match status" value="1"/>
</dbReference>
<dbReference type="SUPFAM" id="SSF56176">
    <property type="entry name" value="FAD-binding/transporter-associated domain-like"/>
    <property type="match status" value="1"/>
</dbReference>
<dbReference type="SUPFAM" id="SSF56194">
    <property type="entry name" value="Uridine diphospho-N-Acetylenolpyruvylglucosamine reductase, MurB, C-terminal domain"/>
    <property type="match status" value="1"/>
</dbReference>
<dbReference type="PROSITE" id="PS51387">
    <property type="entry name" value="FAD_PCMH"/>
    <property type="match status" value="1"/>
</dbReference>